<proteinExistence type="evidence at transcript level"/>
<dbReference type="EMBL" id="AF487464">
    <property type="protein sequence ID" value="AAL88711.1"/>
    <property type="molecule type" value="mRNA"/>
</dbReference>
<dbReference type="RefSeq" id="NP_776939.1">
    <property type="nucleotide sequence ID" value="NM_174514.2"/>
</dbReference>
<dbReference type="SMR" id="Q8SPU7"/>
<dbReference type="FunCoup" id="Q8SPU7">
    <property type="interactions" value="43"/>
</dbReference>
<dbReference type="STRING" id="9913.ENSBTAP00000018151"/>
<dbReference type="GlyCosmos" id="Q8SPU7">
    <property type="glycosylation" value="2 sites, No reported glycans"/>
</dbReference>
<dbReference type="GlyGen" id="Q8SPU7">
    <property type="glycosylation" value="2 sites"/>
</dbReference>
<dbReference type="Ensembl" id="ENSBTAT00000018151.4">
    <property type="protein sequence ID" value="ENSBTAP00000018151.3"/>
    <property type="gene ID" value="ENSBTAG00000013657.6"/>
</dbReference>
<dbReference type="GeneID" id="282177"/>
<dbReference type="KEGG" id="bta:282177"/>
<dbReference type="CTD" id="1138"/>
<dbReference type="VEuPathDB" id="HostDB:ENSBTAG00000013657"/>
<dbReference type="VGNC" id="VGNC:27327">
    <property type="gene designation" value="CHRNA5"/>
</dbReference>
<dbReference type="eggNOG" id="KOG3645">
    <property type="taxonomic scope" value="Eukaryota"/>
</dbReference>
<dbReference type="GeneTree" id="ENSGT00940000159270"/>
<dbReference type="HOGENOM" id="CLU_018074_1_2_1"/>
<dbReference type="InParanoid" id="Q8SPU7"/>
<dbReference type="OMA" id="SCCWYPH"/>
<dbReference type="OrthoDB" id="5975154at2759"/>
<dbReference type="Reactome" id="R-BTA-629594">
    <property type="pathway name" value="Highly calcium permeable postsynaptic nicotinic acetylcholine receptors"/>
</dbReference>
<dbReference type="Reactome" id="R-BTA-629597">
    <property type="pathway name" value="Highly calcium permeable nicotinic acetylcholine receptors"/>
</dbReference>
<dbReference type="Proteomes" id="UP000009136">
    <property type="component" value="Chromosome 21"/>
</dbReference>
<dbReference type="Bgee" id="ENSBTAG00000013657">
    <property type="expression patterns" value="Expressed in prostate gland and 71 other cell types or tissues"/>
</dbReference>
<dbReference type="GO" id="GO:0005892">
    <property type="term" value="C:acetylcholine-gated channel complex"/>
    <property type="evidence" value="ECO:0000318"/>
    <property type="project" value="GO_Central"/>
</dbReference>
<dbReference type="GO" id="GO:0034703">
    <property type="term" value="C:cation channel complex"/>
    <property type="evidence" value="ECO:0007669"/>
    <property type="project" value="Ensembl"/>
</dbReference>
<dbReference type="GO" id="GO:0098981">
    <property type="term" value="C:cholinergic synapse"/>
    <property type="evidence" value="ECO:0007669"/>
    <property type="project" value="Ensembl"/>
</dbReference>
<dbReference type="GO" id="GO:0098691">
    <property type="term" value="C:dopaminergic synapse"/>
    <property type="evidence" value="ECO:0007669"/>
    <property type="project" value="Ensembl"/>
</dbReference>
<dbReference type="GO" id="GO:0043005">
    <property type="term" value="C:neuron projection"/>
    <property type="evidence" value="ECO:0000318"/>
    <property type="project" value="GO_Central"/>
</dbReference>
<dbReference type="GO" id="GO:0098878">
    <property type="term" value="C:neurotransmitter receptor complex"/>
    <property type="evidence" value="ECO:0007669"/>
    <property type="project" value="Ensembl"/>
</dbReference>
<dbReference type="GO" id="GO:0005886">
    <property type="term" value="C:plasma membrane"/>
    <property type="evidence" value="ECO:0000318"/>
    <property type="project" value="GO_Central"/>
</dbReference>
<dbReference type="GO" id="GO:0045211">
    <property type="term" value="C:postsynaptic membrane"/>
    <property type="evidence" value="ECO:0007669"/>
    <property type="project" value="UniProtKB-KW"/>
</dbReference>
<dbReference type="GO" id="GO:0098793">
    <property type="term" value="C:presynapse"/>
    <property type="evidence" value="ECO:0007669"/>
    <property type="project" value="GOC"/>
</dbReference>
<dbReference type="GO" id="GO:0045202">
    <property type="term" value="C:synapse"/>
    <property type="evidence" value="ECO:0000318"/>
    <property type="project" value="GO_Central"/>
</dbReference>
<dbReference type="GO" id="GO:0015464">
    <property type="term" value="F:acetylcholine receptor activity"/>
    <property type="evidence" value="ECO:0007669"/>
    <property type="project" value="Ensembl"/>
</dbReference>
<dbReference type="GO" id="GO:0022848">
    <property type="term" value="F:acetylcholine-gated monoatomic cation-selective channel activity"/>
    <property type="evidence" value="ECO:0000318"/>
    <property type="project" value="GO_Central"/>
</dbReference>
<dbReference type="GO" id="GO:0095500">
    <property type="term" value="P:acetylcholine receptor signaling pathway"/>
    <property type="evidence" value="ECO:0000318"/>
    <property type="project" value="GO_Central"/>
</dbReference>
<dbReference type="GO" id="GO:0035095">
    <property type="term" value="P:behavioral response to nicotine"/>
    <property type="evidence" value="ECO:0007669"/>
    <property type="project" value="Ensembl"/>
</dbReference>
<dbReference type="GO" id="GO:0051899">
    <property type="term" value="P:membrane depolarization"/>
    <property type="evidence" value="ECO:0000318"/>
    <property type="project" value="GO_Central"/>
</dbReference>
<dbReference type="GO" id="GO:0034220">
    <property type="term" value="P:monoatomic ion transmembrane transport"/>
    <property type="evidence" value="ECO:0000318"/>
    <property type="project" value="GO_Central"/>
</dbReference>
<dbReference type="GO" id="GO:0007274">
    <property type="term" value="P:neuromuscular synaptic transmission"/>
    <property type="evidence" value="ECO:0000318"/>
    <property type="project" value="GO_Central"/>
</dbReference>
<dbReference type="GO" id="GO:0099171">
    <property type="term" value="P:presynaptic modulation of chemical synaptic transmission"/>
    <property type="evidence" value="ECO:0007669"/>
    <property type="project" value="Ensembl"/>
</dbReference>
<dbReference type="GO" id="GO:0035094">
    <property type="term" value="P:response to nicotine"/>
    <property type="evidence" value="ECO:0000318"/>
    <property type="project" value="GO_Central"/>
</dbReference>
<dbReference type="GO" id="GO:0007271">
    <property type="term" value="P:synaptic transmission, cholinergic"/>
    <property type="evidence" value="ECO:0000318"/>
    <property type="project" value="GO_Central"/>
</dbReference>
<dbReference type="CDD" id="cd19018">
    <property type="entry name" value="LGIC_ECD_nAChR_A5"/>
    <property type="match status" value="1"/>
</dbReference>
<dbReference type="CDD" id="cd19064">
    <property type="entry name" value="LGIC_TM_nAChR"/>
    <property type="match status" value="1"/>
</dbReference>
<dbReference type="FunFam" id="1.20.58.390:FF:000041">
    <property type="entry name" value="Neuronal acetylcholine receptor subunit alpha-5"/>
    <property type="match status" value="1"/>
</dbReference>
<dbReference type="FunFam" id="2.70.170.10:FF:000047">
    <property type="entry name" value="neuronal acetylcholine receptor subunit alpha-5 isoform X2"/>
    <property type="match status" value="1"/>
</dbReference>
<dbReference type="FunFam" id="1.20.58.390:FF:000001">
    <property type="entry name" value="Neuronal nicotinic acetylcholine receptor subunit 3"/>
    <property type="match status" value="1"/>
</dbReference>
<dbReference type="Gene3D" id="2.70.170.10">
    <property type="entry name" value="Neurotransmitter-gated ion-channel ligand-binding domain"/>
    <property type="match status" value="1"/>
</dbReference>
<dbReference type="Gene3D" id="1.20.58.390">
    <property type="entry name" value="Neurotransmitter-gated ion-channel transmembrane domain"/>
    <property type="match status" value="2"/>
</dbReference>
<dbReference type="InterPro" id="IPR006202">
    <property type="entry name" value="Neur_chan_lig-bd"/>
</dbReference>
<dbReference type="InterPro" id="IPR036734">
    <property type="entry name" value="Neur_chan_lig-bd_sf"/>
</dbReference>
<dbReference type="InterPro" id="IPR006201">
    <property type="entry name" value="Neur_channel"/>
</dbReference>
<dbReference type="InterPro" id="IPR036719">
    <property type="entry name" value="Neuro-gated_channel_TM_sf"/>
</dbReference>
<dbReference type="InterPro" id="IPR038050">
    <property type="entry name" value="Neuro_actylchol_rec"/>
</dbReference>
<dbReference type="InterPro" id="IPR006029">
    <property type="entry name" value="Neurotrans-gated_channel_TM"/>
</dbReference>
<dbReference type="InterPro" id="IPR018000">
    <property type="entry name" value="Neurotransmitter_ion_chnl_CS"/>
</dbReference>
<dbReference type="InterPro" id="IPR002394">
    <property type="entry name" value="Nicotinic_acetylcholine_rcpt"/>
</dbReference>
<dbReference type="NCBIfam" id="TIGR00860">
    <property type="entry name" value="LIC"/>
    <property type="match status" value="1"/>
</dbReference>
<dbReference type="PANTHER" id="PTHR18945">
    <property type="entry name" value="NEUROTRANSMITTER GATED ION CHANNEL"/>
    <property type="match status" value="1"/>
</dbReference>
<dbReference type="Pfam" id="PF02931">
    <property type="entry name" value="Neur_chan_LBD"/>
    <property type="match status" value="1"/>
</dbReference>
<dbReference type="Pfam" id="PF02932">
    <property type="entry name" value="Neur_chan_memb"/>
    <property type="match status" value="2"/>
</dbReference>
<dbReference type="PRINTS" id="PR00254">
    <property type="entry name" value="NICOTINICR"/>
</dbReference>
<dbReference type="PRINTS" id="PR00252">
    <property type="entry name" value="NRIONCHANNEL"/>
</dbReference>
<dbReference type="SUPFAM" id="SSF90112">
    <property type="entry name" value="Neurotransmitter-gated ion-channel transmembrane pore"/>
    <property type="match status" value="1"/>
</dbReference>
<dbReference type="SUPFAM" id="SSF63712">
    <property type="entry name" value="Nicotinic receptor ligand binding domain-like"/>
    <property type="match status" value="1"/>
</dbReference>
<dbReference type="PROSITE" id="PS00236">
    <property type="entry name" value="NEUROTR_ION_CHANNEL"/>
    <property type="match status" value="1"/>
</dbReference>
<reference key="1">
    <citation type="journal article" date="1997" name="J. Neurochem.">
        <title>Neuronal nicotinic acetylcholine receptors on bovine chromaffin cells: cloning, expression, and genomic organization of receptor subunits.</title>
        <authorList>
            <person name="Campos-Caro A."/>
            <person name="Smillie F.I."/>
            <person name="Dominguez del Toro E."/>
            <person name="Rovira J.C."/>
            <person name="Vicente-Agullo F."/>
            <person name="Chapuli J."/>
            <person name="Juiz J.M."/>
            <person name="Sala S."/>
            <person name="Sala F."/>
            <person name="Ballesta J.J."/>
            <person name="Criado M."/>
        </authorList>
    </citation>
    <scope>NUCLEOTIDE SEQUENCE [MRNA]</scope>
</reference>
<accession>Q8SPU7</accession>
<name>ACHA5_BOVIN</name>
<protein>
    <recommendedName>
        <fullName>Neuronal acetylcholine receptor subunit alpha-5</fullName>
    </recommendedName>
</protein>
<keyword id="KW-1003">Cell membrane</keyword>
<keyword id="KW-1015">Disulfide bond</keyword>
<keyword id="KW-0325">Glycoprotein</keyword>
<keyword id="KW-0407">Ion channel</keyword>
<keyword id="KW-0406">Ion transport</keyword>
<keyword id="KW-1071">Ligand-gated ion channel</keyword>
<keyword id="KW-0472">Membrane</keyword>
<keyword id="KW-0675">Receptor</keyword>
<keyword id="KW-1185">Reference proteome</keyword>
<keyword id="KW-0732">Signal</keyword>
<keyword id="KW-0770">Synapse</keyword>
<keyword id="KW-0812">Transmembrane</keyword>
<keyword id="KW-1133">Transmembrane helix</keyword>
<keyword id="KW-0813">Transport</keyword>
<feature type="signal peptide" evidence="6">
    <location>
        <begin position="1"/>
        <end position="29"/>
    </location>
</feature>
<feature type="chain" id="PRO_0000244646" description="Neuronal acetylcholine receptor subunit alpha-5">
    <location>
        <begin position="30"/>
        <end position="475"/>
    </location>
</feature>
<feature type="topological domain" description="Extracellular" evidence="1">
    <location>
        <begin position="30"/>
        <end position="261"/>
    </location>
</feature>
<feature type="transmembrane region" description="Helical" evidence="6">
    <location>
        <begin position="262"/>
        <end position="282"/>
    </location>
</feature>
<feature type="transmembrane region" description="Helical" evidence="6">
    <location>
        <begin position="289"/>
        <end position="309"/>
    </location>
</feature>
<feature type="transmembrane region" description="Helical" evidence="6">
    <location>
        <begin position="324"/>
        <end position="344"/>
    </location>
</feature>
<feature type="topological domain" description="Cytoplasmic" evidence="1">
    <location>
        <begin position="345"/>
        <end position="437"/>
    </location>
</feature>
<feature type="transmembrane region" description="Helical" evidence="6">
    <location>
        <begin position="438"/>
        <end position="458"/>
    </location>
</feature>
<feature type="topological domain" description="Extracellular" evidence="1">
    <location>
        <begin position="459"/>
        <end position="475"/>
    </location>
</feature>
<feature type="glycosylation site" description="N-linked (GlcNAc...) asparagine" evidence="6">
    <location>
        <position position="190"/>
    </location>
</feature>
<feature type="glycosylation site" description="N-linked (GlcNAc...) asparagine" evidence="6">
    <location>
        <position position="236"/>
    </location>
</feature>
<feature type="disulfide bond" evidence="4">
    <location>
        <begin position="177"/>
        <end position="191"/>
    </location>
</feature>
<feature type="disulfide bond" description="Associated with receptor activation" evidence="4">
    <location>
        <begin position="241"/>
        <end position="242"/>
    </location>
</feature>
<sequence length="475" mass="54260">MAAPGWGRWVLGLGPLLLQVFLPFQLVAGRWGPEGAGGGVRRGLAEPSVVAKHEDSLFKDLFQDYERWVRPVEHLNDRIKIKFGLAISQLVDVDEKNQLMTTNVWLKQEWIDVKLRWNPDDYGGIKLIRVPSDSLWTPDIVLFDNADGRFEGASTKTVVRYDGTVTWTPPANYKSSCTIDVTFFPFDLQNCSMKFGSWTYDGSQVDIILEDQDVDKRDFFDNGEWEIVSATGSKGNRTDSCCWYPYITYSFVIKRLPLFYTLFLIIPCIGLSFLTVLVFYLPSNEGEKICLCTSVLVSLTVFLLVIEEIIPSSSKVIPLIGEYLVFTMIFVTLSIMVTVFAINIHHRSSSTHDAMAPWVRKIFLHKLPKLLCMRSHVDRYFSQKEEARSSRGPRSSRNALEAALDSVRYITRHVMKETDVREVVEDWKFIAQVLDRMFLWTFLLVSVVGSLGLFVPVIYKWANIIVPIHIGNENK</sequence>
<organism>
    <name type="scientific">Bos taurus</name>
    <name type="common">Bovine</name>
    <dbReference type="NCBI Taxonomy" id="9913"/>
    <lineage>
        <taxon>Eukaryota</taxon>
        <taxon>Metazoa</taxon>
        <taxon>Chordata</taxon>
        <taxon>Craniata</taxon>
        <taxon>Vertebrata</taxon>
        <taxon>Euteleostomi</taxon>
        <taxon>Mammalia</taxon>
        <taxon>Eutheria</taxon>
        <taxon>Laurasiatheria</taxon>
        <taxon>Artiodactyla</taxon>
        <taxon>Ruminantia</taxon>
        <taxon>Pecora</taxon>
        <taxon>Bovidae</taxon>
        <taxon>Bovinae</taxon>
        <taxon>Bos</taxon>
    </lineage>
</organism>
<evidence type="ECO:0000250" key="1"/>
<evidence type="ECO:0000250" key="2">
    <source>
        <dbReference type="UniProtKB" id="P02709"/>
    </source>
</evidence>
<evidence type="ECO:0000250" key="3">
    <source>
        <dbReference type="UniProtKB" id="P30532"/>
    </source>
</evidence>
<evidence type="ECO:0000250" key="4">
    <source>
        <dbReference type="UniProtKB" id="P32297"/>
    </source>
</evidence>
<evidence type="ECO:0000250" key="5">
    <source>
        <dbReference type="UniProtKB" id="P43681"/>
    </source>
</evidence>
<evidence type="ECO:0000255" key="6"/>
<evidence type="ECO:0000305" key="7"/>
<gene>
    <name type="primary">CHRNA5</name>
</gene>
<comment type="function">
    <text evidence="3">Component of neuronal acetylcholine receptors (nAChRs) that function as pentameric, ligand-gated cation channels with high calcium permeability among other activities. nAChRs are excitatory neurotrasnmitter receptors formed by a collection of nAChR subunits known to mediate synaptic transmission in the nervous system and the neuromuscular junction. Each nAchR subunit confers differential attributes to channel properties, including activation, deactivation and desensitization kinetics, pH sensitivity, cation permeability, and binding to allosteric modulators. Has an accessory rather than functional role and is only able to form functional nAChRs when co-assembled with another beta subunit. Participates in pentameric assemblies along with CHRNA3, CHRNA4, CHRNB2 and CHRNB4. Increases receptor sensitivity to acetylcholine and nicotine when associated with CHRNA4 and CHRNB2. Plays a role in nicotine addiction.</text>
</comment>
<comment type="catalytic activity">
    <reaction evidence="3">
        <text>Ca(2+)(in) = Ca(2+)(out)</text>
        <dbReference type="Rhea" id="RHEA:29671"/>
        <dbReference type="ChEBI" id="CHEBI:29108"/>
    </reaction>
</comment>
<comment type="catalytic activity">
    <reaction evidence="2">
        <text>K(+)(in) = K(+)(out)</text>
        <dbReference type="Rhea" id="RHEA:29463"/>
        <dbReference type="ChEBI" id="CHEBI:29103"/>
    </reaction>
</comment>
<comment type="catalytic activity">
    <reaction evidence="5">
        <text>Na(+)(in) = Na(+)(out)</text>
        <dbReference type="Rhea" id="RHEA:34963"/>
        <dbReference type="ChEBI" id="CHEBI:29101"/>
    </reaction>
</comment>
<comment type="activity regulation">
    <text evidence="3">Activated by a myriad of ligands such as acetylcholine, cytisine, nicotine, choline and epibatidine.</text>
</comment>
<comment type="subunit">
    <text evidence="3">Neuronal AChR that forms heteropentamers composed of two different type of subunits: alpha and non-alpha (beta). CHRNA5/alpha-5 subunit is only able to form functional nAChRs when co-assembled with another alpha subunit, can be combined to CHRNA4/alpha-4 or CHRNA3/alpha-3 and CHRNB4/beta-4 or CHRNB2/beta-2 to give rise to functional receptors. Interacts with LYPD6.</text>
</comment>
<comment type="subcellular location">
    <subcellularLocation>
        <location evidence="4">Synaptic cell membrane</location>
        <topology evidence="6">Multi-pass membrane protein</topology>
    </subcellularLocation>
    <subcellularLocation>
        <location evidence="4">Cell membrane</location>
        <topology evidence="6">Multi-pass membrane protein</topology>
    </subcellularLocation>
</comment>
<comment type="similarity">
    <text evidence="7">Belongs to the ligand-gated ion channel (TC 1.A.9) family. Acetylcholine receptor (TC 1.A.9.1) subfamily. Alpha-5/CHRNA5 sub-subfamily.</text>
</comment>